<reference key="1">
    <citation type="submission" date="2006-01" db="EMBL/GenBank/DDBJ databases">
        <title>Complete sequence of Novosphingobium aromaticivorans DSM 12444.</title>
        <authorList>
            <consortium name="US DOE Joint Genome Institute"/>
            <person name="Copeland A."/>
            <person name="Lucas S."/>
            <person name="Lapidus A."/>
            <person name="Barry K."/>
            <person name="Detter J.C."/>
            <person name="Glavina T."/>
            <person name="Hammon N."/>
            <person name="Israni S."/>
            <person name="Pitluck S."/>
            <person name="Chain P."/>
            <person name="Malfatti S."/>
            <person name="Shin M."/>
            <person name="Vergez L."/>
            <person name="Schmutz J."/>
            <person name="Larimer F."/>
            <person name="Land M."/>
            <person name="Kyrpides N."/>
            <person name="Ivanova N."/>
            <person name="Fredrickson J."/>
            <person name="Balkwill D."/>
            <person name="Romine M.F."/>
            <person name="Richardson P."/>
        </authorList>
    </citation>
    <scope>NUCLEOTIDE SEQUENCE [LARGE SCALE GENOMIC DNA]</scope>
    <source>
        <strain>ATCC 700278 / DSM 12444 / CCUG 56034 / CIP 105152 / NBRC 16084 / F199</strain>
    </source>
</reference>
<dbReference type="EC" id="2.5.1.19" evidence="1"/>
<dbReference type="EMBL" id="CP000248">
    <property type="protein sequence ID" value="ABD25770.1"/>
    <property type="molecule type" value="Genomic_DNA"/>
</dbReference>
<dbReference type="RefSeq" id="WP_011444984.1">
    <property type="nucleotide sequence ID" value="NC_007794.1"/>
</dbReference>
<dbReference type="SMR" id="Q2G8Q3"/>
<dbReference type="STRING" id="279238.Saro_1326"/>
<dbReference type="KEGG" id="nar:Saro_1326"/>
<dbReference type="eggNOG" id="COG0128">
    <property type="taxonomic scope" value="Bacteria"/>
</dbReference>
<dbReference type="HOGENOM" id="CLU_024321_0_1_5"/>
<dbReference type="UniPathway" id="UPA00053">
    <property type="reaction ID" value="UER00089"/>
</dbReference>
<dbReference type="Proteomes" id="UP000009134">
    <property type="component" value="Chromosome"/>
</dbReference>
<dbReference type="GO" id="GO:0005737">
    <property type="term" value="C:cytoplasm"/>
    <property type="evidence" value="ECO:0007669"/>
    <property type="project" value="UniProtKB-SubCell"/>
</dbReference>
<dbReference type="GO" id="GO:0003866">
    <property type="term" value="F:3-phosphoshikimate 1-carboxyvinyltransferase activity"/>
    <property type="evidence" value="ECO:0007669"/>
    <property type="project" value="UniProtKB-UniRule"/>
</dbReference>
<dbReference type="GO" id="GO:0008652">
    <property type="term" value="P:amino acid biosynthetic process"/>
    <property type="evidence" value="ECO:0007669"/>
    <property type="project" value="UniProtKB-KW"/>
</dbReference>
<dbReference type="GO" id="GO:0009073">
    <property type="term" value="P:aromatic amino acid family biosynthetic process"/>
    <property type="evidence" value="ECO:0007669"/>
    <property type="project" value="UniProtKB-KW"/>
</dbReference>
<dbReference type="GO" id="GO:0009423">
    <property type="term" value="P:chorismate biosynthetic process"/>
    <property type="evidence" value="ECO:0007669"/>
    <property type="project" value="UniProtKB-UniRule"/>
</dbReference>
<dbReference type="CDD" id="cd01556">
    <property type="entry name" value="EPSP_synthase"/>
    <property type="match status" value="1"/>
</dbReference>
<dbReference type="FunFam" id="3.65.10.10:FF:000005">
    <property type="entry name" value="3-phosphoshikimate 1-carboxyvinyltransferase"/>
    <property type="match status" value="1"/>
</dbReference>
<dbReference type="FunFam" id="3.65.10.10:FF:000006">
    <property type="entry name" value="3-phosphoshikimate 1-carboxyvinyltransferase"/>
    <property type="match status" value="1"/>
</dbReference>
<dbReference type="Gene3D" id="3.65.10.10">
    <property type="entry name" value="Enolpyruvate transferase domain"/>
    <property type="match status" value="2"/>
</dbReference>
<dbReference type="HAMAP" id="MF_00210">
    <property type="entry name" value="EPSP_synth"/>
    <property type="match status" value="1"/>
</dbReference>
<dbReference type="InterPro" id="IPR001986">
    <property type="entry name" value="Enolpyruvate_Tfrase_dom"/>
</dbReference>
<dbReference type="InterPro" id="IPR036968">
    <property type="entry name" value="Enolpyruvate_Tfrase_sf"/>
</dbReference>
<dbReference type="InterPro" id="IPR006264">
    <property type="entry name" value="EPSP_synthase"/>
</dbReference>
<dbReference type="InterPro" id="IPR023193">
    <property type="entry name" value="EPSP_synthase_CS"/>
</dbReference>
<dbReference type="InterPro" id="IPR013792">
    <property type="entry name" value="RNA3'P_cycl/enolpyr_Trfase_a/b"/>
</dbReference>
<dbReference type="NCBIfam" id="TIGR01356">
    <property type="entry name" value="aroA"/>
    <property type="match status" value="1"/>
</dbReference>
<dbReference type="PANTHER" id="PTHR21090">
    <property type="entry name" value="AROM/DEHYDROQUINATE SYNTHASE"/>
    <property type="match status" value="1"/>
</dbReference>
<dbReference type="PANTHER" id="PTHR21090:SF5">
    <property type="entry name" value="PENTAFUNCTIONAL AROM POLYPEPTIDE"/>
    <property type="match status" value="1"/>
</dbReference>
<dbReference type="Pfam" id="PF00275">
    <property type="entry name" value="EPSP_synthase"/>
    <property type="match status" value="1"/>
</dbReference>
<dbReference type="PIRSF" id="PIRSF000505">
    <property type="entry name" value="EPSPS"/>
    <property type="match status" value="1"/>
</dbReference>
<dbReference type="SUPFAM" id="SSF55205">
    <property type="entry name" value="EPT/RTPC-like"/>
    <property type="match status" value="1"/>
</dbReference>
<dbReference type="PROSITE" id="PS00104">
    <property type="entry name" value="EPSP_SYNTHASE_1"/>
    <property type="match status" value="1"/>
</dbReference>
<dbReference type="PROSITE" id="PS00885">
    <property type="entry name" value="EPSP_SYNTHASE_2"/>
    <property type="match status" value="1"/>
</dbReference>
<name>AROA_NOVAD</name>
<organism>
    <name type="scientific">Novosphingobium aromaticivorans (strain ATCC 700278 / DSM 12444 / CCUG 56034 / CIP 105152 / NBRC 16084 / F199)</name>
    <dbReference type="NCBI Taxonomy" id="279238"/>
    <lineage>
        <taxon>Bacteria</taxon>
        <taxon>Pseudomonadati</taxon>
        <taxon>Pseudomonadota</taxon>
        <taxon>Alphaproteobacteria</taxon>
        <taxon>Sphingomonadales</taxon>
        <taxon>Sphingomonadaceae</taxon>
        <taxon>Novosphingobium</taxon>
    </lineage>
</organism>
<accession>Q2G8Q3</accession>
<comment type="function">
    <text evidence="1">Catalyzes the transfer of the enolpyruvyl moiety of phosphoenolpyruvate (PEP) to the 5-hydroxyl of shikimate-3-phosphate (S3P) to produce enolpyruvyl shikimate-3-phosphate and inorganic phosphate.</text>
</comment>
<comment type="catalytic activity">
    <reaction evidence="1">
        <text>3-phosphoshikimate + phosphoenolpyruvate = 5-O-(1-carboxyvinyl)-3-phosphoshikimate + phosphate</text>
        <dbReference type="Rhea" id="RHEA:21256"/>
        <dbReference type="ChEBI" id="CHEBI:43474"/>
        <dbReference type="ChEBI" id="CHEBI:57701"/>
        <dbReference type="ChEBI" id="CHEBI:58702"/>
        <dbReference type="ChEBI" id="CHEBI:145989"/>
        <dbReference type="EC" id="2.5.1.19"/>
    </reaction>
    <physiologicalReaction direction="left-to-right" evidence="1">
        <dbReference type="Rhea" id="RHEA:21257"/>
    </physiologicalReaction>
</comment>
<comment type="pathway">
    <text evidence="1">Metabolic intermediate biosynthesis; chorismate biosynthesis; chorismate from D-erythrose 4-phosphate and phosphoenolpyruvate: step 6/7.</text>
</comment>
<comment type="subunit">
    <text evidence="1">Monomer.</text>
</comment>
<comment type="subcellular location">
    <subcellularLocation>
        <location evidence="1">Cytoplasm</location>
    </subcellularLocation>
</comment>
<comment type="similarity">
    <text evidence="1">Belongs to the EPSP synthase family.</text>
</comment>
<evidence type="ECO:0000255" key="1">
    <source>
        <dbReference type="HAMAP-Rule" id="MF_00210"/>
    </source>
</evidence>
<sequence length="441" mass="45990">MRPRRFTANGPLKGRIGVPGDKSISHRSIMLGALAVGETRVTGLLEGEDVLSTAAAMRAMGATIERDADGMWHVHGVGVGGLLQPQQALDMGNSGTSTRLLMGLVATHPITATFVGDASLSKRPMGRVIDPLSTMGAEFTASPGGRLPLTLRGISPAVPIEYRLPVASAQVKSAVLLAGLNTPGVTTVIEPIPTRDHSERMLRGFGAELTVDVAADGARVIRVRGEAELKPQDIAVPGDPSSAAFFVVAALLVEGSDLVVENVGLNPTRAALFDVLRLMGGSIEELNRREVGGEPVADLRVRHSLLTGIDVDPAVVPSMVDEFPVLFVAAALAKGRTVTTGLEELRVKESDRISAMRAALELAGATVTETEDGLIIDGTGGDPLPGTAEGASVVTHLDHRIAMSMAIAGIASRNGVEVDDTRPIATSFPVFESLLESATRP</sequence>
<feature type="chain" id="PRO_0000325365" description="3-phosphoshikimate 1-carboxyvinyltransferase">
    <location>
        <begin position="1"/>
        <end position="441"/>
    </location>
</feature>
<feature type="active site" description="Proton acceptor" evidence="1">
    <location>
        <position position="321"/>
    </location>
</feature>
<feature type="binding site" evidence="1">
    <location>
        <position position="22"/>
    </location>
    <ligand>
        <name>3-phosphoshikimate</name>
        <dbReference type="ChEBI" id="CHEBI:145989"/>
    </ligand>
</feature>
<feature type="binding site" evidence="1">
    <location>
        <position position="22"/>
    </location>
    <ligand>
        <name>phosphoenolpyruvate</name>
        <dbReference type="ChEBI" id="CHEBI:58702"/>
    </ligand>
</feature>
<feature type="binding site" evidence="1">
    <location>
        <position position="23"/>
    </location>
    <ligand>
        <name>3-phosphoshikimate</name>
        <dbReference type="ChEBI" id="CHEBI:145989"/>
    </ligand>
</feature>
<feature type="binding site" evidence="1">
    <location>
        <position position="27"/>
    </location>
    <ligand>
        <name>3-phosphoshikimate</name>
        <dbReference type="ChEBI" id="CHEBI:145989"/>
    </ligand>
</feature>
<feature type="binding site" evidence="1">
    <location>
        <position position="95"/>
    </location>
    <ligand>
        <name>phosphoenolpyruvate</name>
        <dbReference type="ChEBI" id="CHEBI:58702"/>
    </ligand>
</feature>
<feature type="binding site" evidence="1">
    <location>
        <position position="123"/>
    </location>
    <ligand>
        <name>phosphoenolpyruvate</name>
        <dbReference type="ChEBI" id="CHEBI:58702"/>
    </ligand>
</feature>
<feature type="binding site" evidence="1">
    <location>
        <position position="168"/>
    </location>
    <ligand>
        <name>3-phosphoshikimate</name>
        <dbReference type="ChEBI" id="CHEBI:145989"/>
    </ligand>
</feature>
<feature type="binding site" evidence="1">
    <location>
        <position position="170"/>
    </location>
    <ligand>
        <name>3-phosphoshikimate</name>
        <dbReference type="ChEBI" id="CHEBI:145989"/>
    </ligand>
</feature>
<feature type="binding site" evidence="1">
    <location>
        <position position="170"/>
    </location>
    <ligand>
        <name>phosphoenolpyruvate</name>
        <dbReference type="ChEBI" id="CHEBI:58702"/>
    </ligand>
</feature>
<feature type="binding site" evidence="1">
    <location>
        <position position="321"/>
    </location>
    <ligand>
        <name>3-phosphoshikimate</name>
        <dbReference type="ChEBI" id="CHEBI:145989"/>
    </ligand>
</feature>
<feature type="binding site" evidence="1">
    <location>
        <position position="348"/>
    </location>
    <ligand>
        <name>3-phosphoshikimate</name>
        <dbReference type="ChEBI" id="CHEBI:145989"/>
    </ligand>
</feature>
<feature type="binding site" evidence="1">
    <location>
        <position position="352"/>
    </location>
    <ligand>
        <name>phosphoenolpyruvate</name>
        <dbReference type="ChEBI" id="CHEBI:58702"/>
    </ligand>
</feature>
<feature type="binding site" evidence="1">
    <location>
        <position position="400"/>
    </location>
    <ligand>
        <name>phosphoenolpyruvate</name>
        <dbReference type="ChEBI" id="CHEBI:58702"/>
    </ligand>
</feature>
<proteinExistence type="inferred from homology"/>
<gene>
    <name evidence="1" type="primary">aroA</name>
    <name type="ordered locus">Saro_1326</name>
</gene>
<protein>
    <recommendedName>
        <fullName evidence="1">3-phosphoshikimate 1-carboxyvinyltransferase</fullName>
        <ecNumber evidence="1">2.5.1.19</ecNumber>
    </recommendedName>
    <alternativeName>
        <fullName evidence="1">5-enolpyruvylshikimate-3-phosphate synthase</fullName>
        <shortName evidence="1">EPSP synthase</shortName>
        <shortName evidence="1">EPSPS</shortName>
    </alternativeName>
</protein>
<keyword id="KW-0028">Amino-acid biosynthesis</keyword>
<keyword id="KW-0057">Aromatic amino acid biosynthesis</keyword>
<keyword id="KW-0963">Cytoplasm</keyword>
<keyword id="KW-1185">Reference proteome</keyword>
<keyword id="KW-0808">Transferase</keyword>